<reference key="1">
    <citation type="journal article" date="1993" name="EMBO J.">
        <title>Variable opacity (Opa) outer membrane proteins account for the cell tropisms displayed by Neisseria gonorrhoeae for human leukocytes and epithelial cells.</title>
        <authorList>
            <person name="Kupsch E.-M."/>
            <person name="Knepper B."/>
            <person name="Kuroki T."/>
            <person name="Heuer I."/>
            <person name="Meyer T.F."/>
        </authorList>
    </citation>
    <scope>NUCLEOTIDE SEQUENCE [GENOMIC DNA]</scope>
    <source>
        <strain>VP1</strain>
    </source>
</reference>
<comment type="function">
    <text>Implicated in a number of adherence functions. OPA proteins are implicated in pathogenesis and are subject to phase variation.</text>
</comment>
<comment type="subcellular location">
    <subcellularLocation>
        <location>Cell outer membrane</location>
    </subcellularLocation>
</comment>
<comment type="similarity">
    <text evidence="3">Belongs to the opacity porin family.</text>
</comment>
<organism>
    <name type="scientific">Neisseria gonorrhoeae</name>
    <dbReference type="NCBI Taxonomy" id="485"/>
    <lineage>
        <taxon>Bacteria</taxon>
        <taxon>Pseudomonadati</taxon>
        <taxon>Pseudomonadota</taxon>
        <taxon>Betaproteobacteria</taxon>
        <taxon>Neisseriales</taxon>
        <taxon>Neisseriaceae</taxon>
        <taxon>Neisseria</taxon>
    </lineage>
</organism>
<name>OPA66_NEIGO</name>
<sequence length="238" mass="26888">AGEGNGRGPYVQADLAYAYEHITHDYPKPTDPSKGKLSTVSDYFRNIRTHSIHPRVSVGYDFGGWRIAADYARYRKWNDSKYSVSIKNLQRRTSNGNRRDRKTENQENGSFHAVSSLGLSAVYDFKLNDKFKPYIGARVAYGHVRHSIDSTKKTTEFLTTAGARGTDPTVSSPYKNTQDAHQESNSIRRVGLGVIAGVGFDITPNLTLDAGYRYHNWGRLENTRFKTHEASLGVRYRF</sequence>
<protein>
    <recommendedName>
        <fullName>Opacity protein opA66</fullName>
    </recommendedName>
</protein>
<keyword id="KW-0998">Cell outer membrane</keyword>
<keyword id="KW-0472">Membrane</keyword>
<keyword id="KW-0732">Signal</keyword>
<keyword id="KW-0812">Transmembrane</keyword>
<keyword id="KW-1134">Transmembrane beta strand</keyword>
<feature type="signal peptide" evidence="1">
    <location>
        <begin position="1" status="less than"/>
        <end position="1"/>
    </location>
</feature>
<feature type="chain" id="PRO_0000021902" description="Opacity protein opA66">
    <location>
        <begin position="2"/>
        <end position="238" status="greater than"/>
    </location>
</feature>
<feature type="region of interest" description="Disordered" evidence="2">
    <location>
        <begin position="88"/>
        <end position="109"/>
    </location>
</feature>
<feature type="region of interest" description="Disordered" evidence="2">
    <location>
        <begin position="162"/>
        <end position="183"/>
    </location>
</feature>
<feature type="compositionally biased region" description="Polar residues" evidence="2">
    <location>
        <begin position="168"/>
        <end position="183"/>
    </location>
</feature>
<feature type="non-terminal residue">
    <location>
        <position position="1"/>
    </location>
</feature>
<feature type="non-terminal residue">
    <location>
        <position position="238"/>
    </location>
</feature>
<proteinExistence type="inferred from homology"/>
<dbReference type="EMBL" id="Z18941">
    <property type="protein sequence ID" value="CAA79374.1"/>
    <property type="molecule type" value="Genomic_DNA"/>
</dbReference>
<dbReference type="PIR" id="S36349">
    <property type="entry name" value="S36349"/>
</dbReference>
<dbReference type="SMR" id="Q05033"/>
<dbReference type="Reactome" id="R-HSA-202733">
    <property type="pathway name" value="Cell surface interactions at the vascular wall"/>
</dbReference>
<dbReference type="GO" id="GO:0009279">
    <property type="term" value="C:cell outer membrane"/>
    <property type="evidence" value="ECO:0000304"/>
    <property type="project" value="Reactome"/>
</dbReference>
<dbReference type="GO" id="GO:0015288">
    <property type="term" value="F:porin activity"/>
    <property type="evidence" value="ECO:0007669"/>
    <property type="project" value="InterPro"/>
</dbReference>
<dbReference type="FunFam" id="2.40.160.20:FF:000005">
    <property type="entry name" value="Opacity protein opA54"/>
    <property type="match status" value="1"/>
</dbReference>
<dbReference type="Gene3D" id="2.40.160.20">
    <property type="match status" value="1"/>
</dbReference>
<dbReference type="InterPro" id="IPR006315">
    <property type="entry name" value="OM_autotransptr_brl_dom"/>
</dbReference>
<dbReference type="InterPro" id="IPR011250">
    <property type="entry name" value="OMP/PagP_b-brl"/>
</dbReference>
<dbReference type="InterPro" id="IPR003394">
    <property type="entry name" value="Porin_opacity"/>
</dbReference>
<dbReference type="NCBIfam" id="TIGR01414">
    <property type="entry name" value="autotrans_barl"/>
    <property type="match status" value="1"/>
</dbReference>
<dbReference type="Pfam" id="PF02462">
    <property type="entry name" value="Opacity"/>
    <property type="match status" value="1"/>
</dbReference>
<dbReference type="SUPFAM" id="SSF56925">
    <property type="entry name" value="OMPA-like"/>
    <property type="match status" value="1"/>
</dbReference>
<evidence type="ECO:0000255" key="1"/>
<evidence type="ECO:0000256" key="2">
    <source>
        <dbReference type="SAM" id="MobiDB-lite"/>
    </source>
</evidence>
<evidence type="ECO:0000305" key="3"/>
<accession>Q05033</accession>